<gene>
    <name evidence="1" type="primary">NS</name>
</gene>
<organism>
    <name type="scientific">Influenza A virus (strain A/Hong Kong/1/1968 H3N2)</name>
    <dbReference type="NCBI Taxonomy" id="506350"/>
    <lineage>
        <taxon>Viruses</taxon>
        <taxon>Riboviria</taxon>
        <taxon>Orthornavirae</taxon>
        <taxon>Negarnaviricota</taxon>
        <taxon>Polyploviricotina</taxon>
        <taxon>Insthoviricetes</taxon>
        <taxon>Articulavirales</taxon>
        <taxon>Orthomyxoviridae</taxon>
        <taxon>Alphainfluenzavirus</taxon>
        <taxon>Alphainfluenzavirus influenzae</taxon>
        <taxon>Influenza A virus</taxon>
    </lineage>
</organism>
<evidence type="ECO:0000255" key="1">
    <source>
        <dbReference type="HAMAP-Rule" id="MF_04066"/>
    </source>
</evidence>
<evidence type="ECO:0000256" key="2">
    <source>
        <dbReference type="SAM" id="MobiDB-lite"/>
    </source>
</evidence>
<sequence>MDSNTVSSFQVDCFLWHVRKQVVDQELGDAPFLDRLRRDQKSLRGRGSTLGLNIEAATRVGKQIVERILKEESDEALKMTIASAPASRYLTDMTIEELSRDWFMLMPKQKVEGPLCIRIDQAIMDKNIMLKANFSVIFDRLETLILLRAFTEEGAIVGEISPLPSLPGHTIEDVKNAIGVLIGGLEWNDNTVRVSKTLQRFAWGSSNENGRPPLTPKQKRKMARTVRSKVRRDKMAD</sequence>
<organismHost>
    <name type="scientific">Aves</name>
    <dbReference type="NCBI Taxonomy" id="8782"/>
</organismHost>
<organismHost>
    <name type="scientific">Cetacea</name>
    <name type="common">whales</name>
    <dbReference type="NCBI Taxonomy" id="9721"/>
</organismHost>
<organismHost>
    <name type="scientific">Homo sapiens</name>
    <name type="common">Human</name>
    <dbReference type="NCBI Taxonomy" id="9606"/>
</organismHost>
<organismHost>
    <name type="scientific">Phocidae</name>
    <name type="common">true seals</name>
    <dbReference type="NCBI Taxonomy" id="9709"/>
</organismHost>
<organismHost>
    <name type="scientific">Sus scrofa</name>
    <name type="common">Pig</name>
    <dbReference type="NCBI Taxonomy" id="9823"/>
</organismHost>
<protein>
    <recommendedName>
        <fullName evidence="1">Non-structural protein 1</fullName>
        <shortName evidence="1">NS1</shortName>
    </recommendedName>
    <alternativeName>
        <fullName evidence="1">NS1A</fullName>
    </alternativeName>
</protein>
<feature type="chain" id="PRO_0000324245" description="Non-structural protein 1">
    <location>
        <begin position="1"/>
        <end position="237"/>
    </location>
</feature>
<feature type="region of interest" description="RNA-binding and homodimerization" evidence="1">
    <location>
        <begin position="1"/>
        <end position="73"/>
    </location>
</feature>
<feature type="region of interest" description="CPSF4-binding" evidence="1">
    <location>
        <begin position="180"/>
        <end position="215"/>
    </location>
</feature>
<feature type="region of interest" description="Disordered" evidence="2">
    <location>
        <begin position="205"/>
        <end position="237"/>
    </location>
</feature>
<feature type="region of interest" description="PABPN1-binding" evidence="1">
    <location>
        <begin position="223"/>
        <end position="230"/>
    </location>
</feature>
<feature type="short sequence motif" description="Nuclear localization signal" evidence="1">
    <location>
        <begin position="34"/>
        <end position="38"/>
    </location>
</feature>
<feature type="short sequence motif" description="Nuclear export signal" evidence="1">
    <location>
        <begin position="137"/>
        <end position="146"/>
    </location>
</feature>
<feature type="compositionally biased region" description="Basic residues" evidence="2">
    <location>
        <begin position="217"/>
        <end position="237"/>
    </location>
</feature>
<feature type="sequence variant" description="In strain: Isolate MA20, Isolate MA20a.">
    <original>V</original>
    <variation>A</variation>
    <location>
        <position position="23"/>
    </location>
</feature>
<feature type="sequence variant" description="In strain: Isolate MA12, Isolate MA12a, Isolate MA12b, isolate MA20, isolate MA20a, Isolate MA20b, Isolate MA20d.">
    <original>I</original>
    <variation>M</variation>
    <location>
        <position position="81"/>
    </location>
</feature>
<feature type="sequence variant" description="In strain: Isolate MA20b, Isolate MA20d and Isolate MA20c.">
    <original>F</original>
    <variation>L</variation>
    <location>
        <position position="103"/>
    </location>
</feature>
<dbReference type="EMBL" id="AF348198">
    <property type="protein sequence ID" value="AAK51750.1"/>
    <property type="molecule type" value="Genomic_RNA"/>
</dbReference>
<dbReference type="EMBL" id="AF348199">
    <property type="protein sequence ID" value="AAK51752.1"/>
    <property type="molecule type" value="Genomic_RNA"/>
</dbReference>
<dbReference type="EMBL" id="AF348200">
    <property type="protein sequence ID" value="AAK51754.1"/>
    <property type="molecule type" value="Genomic_RNA"/>
</dbReference>
<dbReference type="EMBL" id="AF348201">
    <property type="protein sequence ID" value="AAK51756.1"/>
    <property type="molecule type" value="Genomic_RNA"/>
</dbReference>
<dbReference type="EMBL" id="AF348202">
    <property type="protein sequence ID" value="AAK51758.1"/>
    <property type="molecule type" value="Genomic_RNA"/>
</dbReference>
<dbReference type="EMBL" id="AF348203">
    <property type="protein sequence ID" value="AAK51760.1"/>
    <property type="molecule type" value="Genomic_RNA"/>
</dbReference>
<dbReference type="EMBL" id="AF348204">
    <property type="protein sequence ID" value="AAK51762.1"/>
    <property type="molecule type" value="Genomic_RNA"/>
</dbReference>
<dbReference type="EMBL" id="AF348205">
    <property type="protein sequence ID" value="AAK51764.1"/>
    <property type="molecule type" value="Genomic_RNA"/>
</dbReference>
<dbReference type="EMBL" id="AF348206">
    <property type="protein sequence ID" value="AAK51766.1"/>
    <property type="molecule type" value="Genomic_RNA"/>
</dbReference>
<dbReference type="SMR" id="Q91MA0"/>
<dbReference type="Proteomes" id="UP000142359">
    <property type="component" value="Genome"/>
</dbReference>
<dbReference type="GO" id="GO:0030430">
    <property type="term" value="C:host cell cytoplasm"/>
    <property type="evidence" value="ECO:0007669"/>
    <property type="project" value="UniProtKB-SubCell"/>
</dbReference>
<dbReference type="GO" id="GO:0042025">
    <property type="term" value="C:host cell nucleus"/>
    <property type="evidence" value="ECO:0007669"/>
    <property type="project" value="UniProtKB-SubCell"/>
</dbReference>
<dbReference type="GO" id="GO:0030291">
    <property type="term" value="F:protein serine/threonine kinase inhibitor activity"/>
    <property type="evidence" value="ECO:0007669"/>
    <property type="project" value="UniProtKB-KW"/>
</dbReference>
<dbReference type="GO" id="GO:0003723">
    <property type="term" value="F:RNA binding"/>
    <property type="evidence" value="ECO:0007669"/>
    <property type="project" value="UniProtKB-KW"/>
</dbReference>
<dbReference type="GO" id="GO:0039540">
    <property type="term" value="P:symbiont-mediated suppression of host cytoplasmic pattern recognition receptor signaling pathway via inhibition of RIG-I activity"/>
    <property type="evidence" value="ECO:0007669"/>
    <property type="project" value="UniProtKB-KW"/>
</dbReference>
<dbReference type="GO" id="GO:0039657">
    <property type="term" value="P:symbiont-mediated suppression of host gene expression"/>
    <property type="evidence" value="ECO:0007669"/>
    <property type="project" value="UniProtKB-KW"/>
</dbReference>
<dbReference type="GO" id="GO:0039524">
    <property type="term" value="P:symbiont-mediated suppression of host mRNA processing"/>
    <property type="evidence" value="ECO:0007669"/>
    <property type="project" value="UniProtKB-KW"/>
</dbReference>
<dbReference type="GO" id="GO:0039580">
    <property type="term" value="P:symbiont-mediated suppression of host PKR/eIFalpha signaling"/>
    <property type="evidence" value="ECO:0007669"/>
    <property type="project" value="UniProtKB-KW"/>
</dbReference>
<dbReference type="GO" id="GO:0039502">
    <property type="term" value="P:symbiont-mediated suppression of host type I interferon-mediated signaling pathway"/>
    <property type="evidence" value="ECO:0007669"/>
    <property type="project" value="UniProtKB-KW"/>
</dbReference>
<dbReference type="FunFam" id="1.10.287.10:FF:000001">
    <property type="entry name" value="Non-structural protein 1"/>
    <property type="match status" value="1"/>
</dbReference>
<dbReference type="FunFam" id="3.30.420.330:FF:000001">
    <property type="entry name" value="Non-structural protein 1"/>
    <property type="match status" value="1"/>
</dbReference>
<dbReference type="Gene3D" id="3.30.420.330">
    <property type="entry name" value="Influenza virus non-structural protein, effector domain"/>
    <property type="match status" value="1"/>
</dbReference>
<dbReference type="Gene3D" id="1.10.287.10">
    <property type="entry name" value="S15/NS1, RNA-binding"/>
    <property type="match status" value="1"/>
</dbReference>
<dbReference type="HAMAP" id="MF_04066">
    <property type="entry name" value="INFV_NS1"/>
    <property type="match status" value="1"/>
</dbReference>
<dbReference type="InterPro" id="IPR004208">
    <property type="entry name" value="NS1"/>
</dbReference>
<dbReference type="InterPro" id="IPR000256">
    <property type="entry name" value="NS1A"/>
</dbReference>
<dbReference type="InterPro" id="IPR038064">
    <property type="entry name" value="NS1A_effect_dom-like_sf"/>
</dbReference>
<dbReference type="InterPro" id="IPR009068">
    <property type="entry name" value="uS15_NS1_RNA-bd_sf"/>
</dbReference>
<dbReference type="Pfam" id="PF00600">
    <property type="entry name" value="Flu_NS1"/>
    <property type="match status" value="1"/>
</dbReference>
<dbReference type="SUPFAM" id="SSF143021">
    <property type="entry name" value="Ns1 effector domain-like"/>
    <property type="match status" value="1"/>
</dbReference>
<dbReference type="SUPFAM" id="SSF47060">
    <property type="entry name" value="S15/NS1 RNA-binding domain"/>
    <property type="match status" value="1"/>
</dbReference>
<comment type="function">
    <text evidence="1">Inhibits post-transcriptional processing of cellular pre-mRNA, by binding and inhibiting two cellular proteins that are required for the 3'-end processing of cellular pre-mRNAs: the 30 kDa cleavage and polyadenylation specificity factor/CPSF4 and the poly(A)-binding protein 2/PABPN1. In turn, unprocessed 3' end pre-mRNAs accumulate in the host nucleus and are no longer exported to the cytoplasm. Cellular protein synthesis is thereby shut off very early after virus infection. Viral protein synthesis is not affected by the inhibition of the cellular 3' end processing machinery because the poly(A) tails of viral mRNAs are produced by the viral polymerase through a stuttering mechanism. Prevents the establishment of the cellular antiviral state by inhibiting TRIM25-mediated RIGI ubiquitination, which normally triggers the antiviral transduction signal that leads to the activation of type I IFN genes by transcription factors IRF3 and IRF7. Also binds poly(A) and U6 snRNA. Inhibits the integrated stress response (ISR) in the infected cell by blocking dsRNA binding by EIF2AK2/PKR and further phosphorylation of EIF2S1/EIF-2ALPHA. Stress granule formation is thus inhibited, which allows protein synthesis and viral replication.</text>
</comment>
<comment type="subunit">
    <text evidence="1">Homodimer. Interacts with host TRIM25 (via coiled coil); this interaction specifically inhibits TRIM25 multimerization and TRIM25-mediated RIGI CARD ubiquitination. Interacts with human EIF2AK2/PKR, CPSF4, IVNS1ABP and PABPN1.</text>
</comment>
<comment type="subcellular location">
    <subcellularLocation>
        <location evidence="1">Host nucleus</location>
    </subcellularLocation>
    <subcellularLocation>
        <location evidence="1">Host cytoplasm</location>
    </subcellularLocation>
    <text evidence="1">In uninfected, transfected cells, NS1 is localized in the nucleus. Only in virus infected cells, the nuclear export signal is unveiled, presumably by a viral protein, and a fraction of NS1 is exported in the cytoplasm.</text>
</comment>
<comment type="alternative products">
    <event type="alternative splicing"/>
    <isoform>
        <id>Q91MA0-1</id>
        <name>NS1</name>
        <sequence type="displayed"/>
    </isoform>
    <isoform>
        <id>Q910E4-1</id>
        <name>NEP</name>
        <name>NS2</name>
        <sequence type="external"/>
    </isoform>
</comment>
<comment type="domain">
    <text evidence="1">The dsRNA-binding region is required for suppression of RNA silencing.</text>
</comment>
<comment type="PTM">
    <text evidence="1">Upon interferon induction, ISGylated via host HERC5; this results in the impairment of NS1 interaction with RNA targets due to its inability to form homodimers and to interact with host EIF2AK2/PKR.</text>
</comment>
<comment type="similarity">
    <text evidence="1">Belongs to the influenza A viruses NS1 family.</text>
</comment>
<keyword id="KW-0025">Alternative splicing</keyword>
<keyword id="KW-1262">Eukaryotic host gene expression shutoff by virus</keyword>
<keyword id="KW-1035">Host cytoplasm</keyword>
<keyword id="KW-1190">Host gene expression shutoff by virus</keyword>
<keyword id="KW-1192">Host mRNA suppression by virus</keyword>
<keyword id="KW-1048">Host nucleus</keyword>
<keyword id="KW-0945">Host-virus interaction</keyword>
<keyword id="KW-1090">Inhibition of host innate immune response by virus</keyword>
<keyword id="KW-1114">Inhibition of host interferon signaling pathway by virus</keyword>
<keyword id="KW-1102">Inhibition of host PKR by virus</keyword>
<keyword id="KW-1103">Inhibition of host pre-mRNA processing by virus</keyword>
<keyword id="KW-1088">Inhibition of host RIG-I by virus</keyword>
<keyword id="KW-1113">Inhibition of host RLR pathway by virus</keyword>
<keyword id="KW-0922">Interferon antiviral system evasion</keyword>
<keyword id="KW-0694">RNA-binding</keyword>
<keyword id="KW-0832">Ubl conjugation</keyword>
<keyword id="KW-0899">Viral immunoevasion</keyword>
<name>NS1_I68A4</name>
<reference key="1">
    <citation type="journal article" date="2001" name="Proc. Natl. Acad. Sci. U.S.A.">
        <title>Pattern of mutation in the genome of influenza A virus on adaptation to increased virulence in the mouse lung: identification of functional themes.</title>
        <authorList>
            <person name="Brown E.G."/>
            <person name="Liu H."/>
            <person name="Kit L.C."/>
            <person name="Baird S."/>
            <person name="Nesrallah M."/>
        </authorList>
    </citation>
    <scope>NUCLEOTIDE SEQUENCE [GENOMIC RNA]</scope>
    <source>
        <strain>A/Hong Kong/1/68</strain>
        <strain>Isolate MA12</strain>
        <strain>Isolate MA12a</strain>
        <strain>Isolate MA12b</strain>
        <strain>Isolate MA20</strain>
        <strain>Isolate MA20a</strain>
        <strain>Isolate MA20b</strain>
        <strain>Isolate MA20c</strain>
        <strain>Isolate MA20d</strain>
    </source>
</reference>
<proteinExistence type="inferred from homology"/>
<accession>Q91MA0</accession>
<accession>Q910I0</accession>
<accession>Q910I5</accession>
<accession>Q910P3</accession>
<accession>Q91M99</accession>